<evidence type="ECO:0000250" key="1">
    <source>
        <dbReference type="UniProtKB" id="O15091"/>
    </source>
</evidence>
<evidence type="ECO:0000255" key="2"/>
<evidence type="ECO:0000256" key="3">
    <source>
        <dbReference type="SAM" id="MobiDB-lite"/>
    </source>
</evidence>
<evidence type="ECO:0000305" key="4"/>
<sequence>MTFYLSGFRSFLKLWKSNPYFELGPATSSASFFLGVHCVIGNQQRWFSVKPTTPPNSKILNLLVTKARTLKKGNDSNKQASSGPHYFAAGEAKKRSHLSGNPQNQGHTLPVKSTVQLPTKPLNSEEWDKLKEDFKGKASFEDFVISQMTRSCSSVDVAKSLLAWVAAKNNGIVGYNLLVKYLYLCVFHKQTSEVIDVYEIMKAKYKSLESGGYTLLIRGLIHSDRWREALLLLEDIKKVMVPSKKNYGDCIQGALLHQDVNVAWSLYQELVGHNLIPLLETLKAFFDHGKDMNDDQYSNQLLDILLYLRNNQLYPGESFAHSIKTWFESIPGRQWKGQFTTIQKSGQCSSCGRAIESIHLSPEEYEFLKETIMRDVIDGGDQYKKTTPQELKRFERFVKSCPPFDIVIDGLNVAKMFPKGRESQNLLGIVSQLAQQNLQLLVLGRKHMLRPSSQWRKDEMEQVRKQAHCFFADNISEDDPFLLYATLNSGSHCKFITKDLLRDHKACLPDARAQRLFFKWQQGHQLAITKGFLKSKLTFQHILSYDTVVQTTGDTWHIPYDEDLVPRSSCEVPTKWLCLQRKTPAPC</sequence>
<dbReference type="EC" id="3.1.26.5" evidence="1"/>
<dbReference type="EMBL" id="CH473947">
    <property type="protein sequence ID" value="EDM03424.1"/>
    <property type="molecule type" value="Genomic_DNA"/>
</dbReference>
<dbReference type="EMBL" id="BC168878">
    <property type="protein sequence ID" value="AAI68878.1"/>
    <property type="molecule type" value="mRNA"/>
</dbReference>
<dbReference type="RefSeq" id="NP_001100200.1">
    <property type="nucleotide sequence ID" value="NM_001106730.2"/>
</dbReference>
<dbReference type="SMR" id="B5DF07"/>
<dbReference type="FunCoup" id="B5DF07">
    <property type="interactions" value="3366"/>
</dbReference>
<dbReference type="STRING" id="10116.ENSRNOP00000009306"/>
<dbReference type="PhosphoSitePlus" id="B5DF07"/>
<dbReference type="PaxDb" id="10116-ENSRNOP00000009306"/>
<dbReference type="PeptideAtlas" id="B5DF07"/>
<dbReference type="Ensembl" id="ENSRNOT00000009304.5">
    <property type="protein sequence ID" value="ENSRNOP00000009306.4"/>
    <property type="gene ID" value="ENSRNOG00000007043.5"/>
</dbReference>
<dbReference type="GeneID" id="299050"/>
<dbReference type="KEGG" id="rno:299050"/>
<dbReference type="UCSC" id="RGD:1305089">
    <property type="organism name" value="rat"/>
</dbReference>
<dbReference type="AGR" id="RGD:1305089"/>
<dbReference type="CTD" id="9692"/>
<dbReference type="RGD" id="1305089">
    <property type="gene designation" value="Prorp"/>
</dbReference>
<dbReference type="eggNOG" id="ENOG502QRKG">
    <property type="taxonomic scope" value="Eukaryota"/>
</dbReference>
<dbReference type="GeneTree" id="ENSGT00390000002201"/>
<dbReference type="HOGENOM" id="CLU_033070_1_0_1"/>
<dbReference type="InParanoid" id="B5DF07"/>
<dbReference type="OMA" id="VKEPIRY"/>
<dbReference type="OrthoDB" id="46913at2759"/>
<dbReference type="PhylomeDB" id="B5DF07"/>
<dbReference type="TreeFam" id="TF324726"/>
<dbReference type="PRO" id="PR:B5DF07"/>
<dbReference type="Proteomes" id="UP000002494">
    <property type="component" value="Chromosome 6"/>
</dbReference>
<dbReference type="Proteomes" id="UP000234681">
    <property type="component" value="Chromosome 6"/>
</dbReference>
<dbReference type="Bgee" id="ENSRNOG00000007043">
    <property type="expression patterns" value="Expressed in testis and 20 other cell types or tissues"/>
</dbReference>
<dbReference type="GO" id="GO:0042645">
    <property type="term" value="C:mitochondrial nucleoid"/>
    <property type="evidence" value="ECO:0000266"/>
    <property type="project" value="RGD"/>
</dbReference>
<dbReference type="GO" id="GO:0030678">
    <property type="term" value="C:mitochondrial ribonuclease P complex"/>
    <property type="evidence" value="ECO:0000250"/>
    <property type="project" value="UniProtKB"/>
</dbReference>
<dbReference type="GO" id="GO:0005739">
    <property type="term" value="C:mitochondrion"/>
    <property type="evidence" value="ECO:0000266"/>
    <property type="project" value="RGD"/>
</dbReference>
<dbReference type="GO" id="GO:0005654">
    <property type="term" value="C:nucleoplasm"/>
    <property type="evidence" value="ECO:0007669"/>
    <property type="project" value="Ensembl"/>
</dbReference>
<dbReference type="GO" id="GO:0046872">
    <property type="term" value="F:metal ion binding"/>
    <property type="evidence" value="ECO:0007669"/>
    <property type="project" value="UniProtKB-KW"/>
</dbReference>
<dbReference type="GO" id="GO:0004526">
    <property type="term" value="F:ribonuclease P activity"/>
    <property type="evidence" value="ECO:0000250"/>
    <property type="project" value="UniProtKB"/>
</dbReference>
<dbReference type="GO" id="GO:0097745">
    <property type="term" value="P:mitochondrial tRNA 5'-end processing"/>
    <property type="evidence" value="ECO:0000250"/>
    <property type="project" value="UniProtKB"/>
</dbReference>
<dbReference type="GO" id="GO:0001682">
    <property type="term" value="P:tRNA 5'-leader removal"/>
    <property type="evidence" value="ECO:0000318"/>
    <property type="project" value="GO_Central"/>
</dbReference>
<dbReference type="CDD" id="cd18718">
    <property type="entry name" value="PIN_PRORP"/>
    <property type="match status" value="1"/>
</dbReference>
<dbReference type="FunFam" id="1.25.40.10:FF:000276">
    <property type="entry name" value="Mitochondrial ribonuclease P catalytic subunit"/>
    <property type="match status" value="1"/>
</dbReference>
<dbReference type="FunFam" id="3.40.50.11980:FF:000003">
    <property type="entry name" value="Mitochondrial ribonuclease P catalytic subunit"/>
    <property type="match status" value="1"/>
</dbReference>
<dbReference type="Gene3D" id="3.40.50.11980">
    <property type="match status" value="1"/>
</dbReference>
<dbReference type="Gene3D" id="1.25.40.10">
    <property type="entry name" value="Tetratricopeptide repeat domain"/>
    <property type="match status" value="1"/>
</dbReference>
<dbReference type="InterPro" id="IPR033495">
    <property type="entry name" value="MRPP3_PIN_dom"/>
</dbReference>
<dbReference type="InterPro" id="IPR031595">
    <property type="entry name" value="PRORP_C"/>
</dbReference>
<dbReference type="InterPro" id="IPR011990">
    <property type="entry name" value="TPR-like_helical_dom_sf"/>
</dbReference>
<dbReference type="PANTHER" id="PTHR13547">
    <property type="match status" value="1"/>
</dbReference>
<dbReference type="PANTHER" id="PTHR13547:SF1">
    <property type="entry name" value="MITOCHONDRIAL RIBONUCLEASE P CATALYTIC SUBUNIT"/>
    <property type="match status" value="1"/>
</dbReference>
<dbReference type="Pfam" id="PF16953">
    <property type="entry name" value="PRORP"/>
    <property type="match status" value="1"/>
</dbReference>
<gene>
    <name type="primary">Prorp</name>
    <name type="synonym">Mrpp3</name>
</gene>
<comment type="function">
    <text evidence="1">Catalytic ribonuclease component of mitochondrial ribonuclease P, a complex composed of TRMT10C/MRPP1, HSD17B10/MRPP2 and PRORP/MRPP3, which cleaves tRNA molecules in their 5'-ends. The presence of TRMT10C/MRPP1, HSD17B10/MRPP2 is required to catalyze tRNA molecules in their 5'-ends.</text>
</comment>
<comment type="catalytic activity">
    <reaction evidence="1">
        <text>Endonucleolytic cleavage of RNA, removing 5'-extranucleotides from tRNA precursor.</text>
        <dbReference type="EC" id="3.1.26.5"/>
    </reaction>
</comment>
<comment type="cofactor">
    <cofactor evidence="1">
        <name>Mg(2+)</name>
        <dbReference type="ChEBI" id="CHEBI:18420"/>
    </cofactor>
    <cofactor evidence="1">
        <name>Mn(2+)</name>
        <dbReference type="ChEBI" id="CHEBI:29035"/>
    </cofactor>
    <text evidence="1">Binds 2 Mg(2+) or Mg(2+) ions per subunit.</text>
</comment>
<comment type="subunit">
    <text evidence="1">Catalytic component of mitochondrial ribonuclease P, a complex composed of TRMT10C/MRPP1, HSD17B10/MRPP2 and PRORP/MRPP3.</text>
</comment>
<comment type="subcellular location">
    <subcellularLocation>
        <location evidence="1">Mitochondrion</location>
    </subcellularLocation>
</comment>
<comment type="domain">
    <text evidence="1">Displays a distorted and non-productive active site that probably switches to a fully productive state only upon association with TRMT10C/MRPP1, HSD17B10/MRPP2 and pre-tRNA substrate.</text>
</comment>
<comment type="PTM">
    <text evidence="1">Degraded by LONP1 following mitochondrial unfolded protein response, probably leading to inhibit translation in mitochondrion.</text>
</comment>
<comment type="similarity">
    <text evidence="4">Belongs to the PPR family. P subfamily.</text>
</comment>
<keyword id="KW-0378">Hydrolase</keyword>
<keyword id="KW-0460">Magnesium</keyword>
<keyword id="KW-0464">Manganese</keyword>
<keyword id="KW-0479">Metal-binding</keyword>
<keyword id="KW-0496">Mitochondrion</keyword>
<keyword id="KW-0540">Nuclease</keyword>
<keyword id="KW-1185">Reference proteome</keyword>
<keyword id="KW-0809">Transit peptide</keyword>
<keyword id="KW-0819">tRNA processing</keyword>
<keyword id="KW-0862">Zinc</keyword>
<organism>
    <name type="scientific">Rattus norvegicus</name>
    <name type="common">Rat</name>
    <dbReference type="NCBI Taxonomy" id="10116"/>
    <lineage>
        <taxon>Eukaryota</taxon>
        <taxon>Metazoa</taxon>
        <taxon>Chordata</taxon>
        <taxon>Craniata</taxon>
        <taxon>Vertebrata</taxon>
        <taxon>Euteleostomi</taxon>
        <taxon>Mammalia</taxon>
        <taxon>Eutheria</taxon>
        <taxon>Euarchontoglires</taxon>
        <taxon>Glires</taxon>
        <taxon>Rodentia</taxon>
        <taxon>Myomorpha</taxon>
        <taxon>Muroidea</taxon>
        <taxon>Muridae</taxon>
        <taxon>Murinae</taxon>
        <taxon>Rattus</taxon>
    </lineage>
</organism>
<proteinExistence type="evidence at transcript level"/>
<protein>
    <recommendedName>
        <fullName evidence="1">Mitochondrial ribonuclease P catalytic subunit</fullName>
        <ecNumber evidence="1">3.1.26.5</ecNumber>
    </recommendedName>
    <alternativeName>
        <fullName evidence="1">Mitochondrial ribonuclease P protein 3</fullName>
        <shortName evidence="1">Mitochondrial RNase P protein 3</shortName>
    </alternativeName>
</protein>
<reference key="1">
    <citation type="submission" date="2005-07" db="EMBL/GenBank/DDBJ databases">
        <authorList>
            <person name="Mural R.J."/>
            <person name="Adams M.D."/>
            <person name="Myers E.W."/>
            <person name="Smith H.O."/>
            <person name="Venter J.C."/>
        </authorList>
    </citation>
    <scope>NUCLEOTIDE SEQUENCE [LARGE SCALE GENOMIC DNA]</scope>
</reference>
<reference key="2">
    <citation type="journal article" date="2004" name="Genome Res.">
        <title>The status, quality, and expansion of the NIH full-length cDNA project: the Mammalian Gene Collection (MGC).</title>
        <authorList>
            <consortium name="The MGC Project Team"/>
        </authorList>
    </citation>
    <scope>NUCLEOTIDE SEQUENCE [LARGE SCALE MRNA]</scope>
    <source>
        <tissue>Thymus</tissue>
    </source>
</reference>
<name>MRPP3_RAT</name>
<feature type="transit peptide" description="Mitochondrion" evidence="2">
    <location>
        <begin position="1"/>
        <end position="46"/>
    </location>
</feature>
<feature type="chain" id="PRO_0000360398" description="Mitochondrial ribonuclease P catalytic subunit">
    <location>
        <begin position="47"/>
        <end position="587"/>
    </location>
</feature>
<feature type="domain" description="PRORP">
    <location>
        <begin position="342"/>
        <end position="578"/>
    </location>
</feature>
<feature type="region of interest" description="Disordered" evidence="3">
    <location>
        <begin position="94"/>
        <end position="114"/>
    </location>
</feature>
<feature type="compositionally biased region" description="Polar residues" evidence="3">
    <location>
        <begin position="98"/>
        <end position="114"/>
    </location>
</feature>
<feature type="binding site" evidence="1">
    <location>
        <position position="348"/>
    </location>
    <ligand>
        <name>Zn(2+)</name>
        <dbReference type="ChEBI" id="CHEBI:29105"/>
    </ligand>
</feature>
<feature type="binding site" evidence="1">
    <location>
        <position position="351"/>
    </location>
    <ligand>
        <name>Zn(2+)</name>
        <dbReference type="ChEBI" id="CHEBI:29105"/>
    </ligand>
</feature>
<feature type="binding site" evidence="1">
    <location>
        <position position="409"/>
    </location>
    <ligand>
        <name>Mg(2+)</name>
        <dbReference type="ChEBI" id="CHEBI:18420"/>
        <label>1</label>
        <note>catalytic</note>
    </ligand>
</feature>
<feature type="binding site" evidence="1">
    <location>
        <position position="478"/>
    </location>
    <ligand>
        <name>Mg(2+)</name>
        <dbReference type="ChEBI" id="CHEBI:18420"/>
        <label>1</label>
        <note>catalytic</note>
    </ligand>
</feature>
<feature type="binding site" evidence="1">
    <location>
        <position position="479"/>
    </location>
    <ligand>
        <name>Mg(2+)</name>
        <dbReference type="ChEBI" id="CHEBI:18420"/>
        <label>2</label>
        <note>catalytic</note>
    </ligand>
</feature>
<feature type="binding site" evidence="1">
    <location>
        <position position="499"/>
    </location>
    <ligand>
        <name>Mg(2+)</name>
        <dbReference type="ChEBI" id="CHEBI:18420"/>
        <label>2</label>
        <note>catalytic</note>
    </ligand>
</feature>
<feature type="binding site" evidence="1">
    <location>
        <position position="557"/>
    </location>
    <ligand>
        <name>Zn(2+)</name>
        <dbReference type="ChEBI" id="CHEBI:29105"/>
    </ligand>
</feature>
<feature type="binding site" evidence="1">
    <location>
        <position position="578"/>
    </location>
    <ligand>
        <name>Zn(2+)</name>
        <dbReference type="ChEBI" id="CHEBI:29105"/>
    </ligand>
</feature>
<accession>B5DF07</accession>